<reference key="1">
    <citation type="journal article" date="2004" name="Mol. Biol. Evol.">
        <title>The chloroplast genome of Nymphaea alba: whole-genome analyses and the problem of identifying the most basal angiosperm.</title>
        <authorList>
            <person name="Goremykin V.V."/>
            <person name="Hirsch-Ernst K.I."/>
            <person name="Woelfl S."/>
            <person name="Hellwig F.H."/>
        </authorList>
    </citation>
    <scope>NUCLEOTIDE SEQUENCE [LARGE SCALE GENOMIC DNA]</scope>
</reference>
<protein>
    <recommendedName>
        <fullName evidence="2">Large ribosomal subunit protein uL22c</fullName>
    </recommendedName>
    <alternativeName>
        <fullName>50S ribosomal protein L22, chloroplastic</fullName>
    </alternativeName>
</protein>
<organism>
    <name type="scientific">Nymphaea alba</name>
    <name type="common">White water-lily</name>
    <name type="synonym">Castalia alba</name>
    <dbReference type="NCBI Taxonomy" id="34301"/>
    <lineage>
        <taxon>Eukaryota</taxon>
        <taxon>Viridiplantae</taxon>
        <taxon>Streptophyta</taxon>
        <taxon>Embryophyta</taxon>
        <taxon>Tracheophyta</taxon>
        <taxon>Spermatophyta</taxon>
        <taxon>Magnoliopsida</taxon>
        <taxon>Nymphaeales</taxon>
        <taxon>Nymphaeaceae</taxon>
        <taxon>Nymphaea</taxon>
    </lineage>
</organism>
<comment type="function">
    <text evidence="1">This protein binds specifically to 23S rRNA.</text>
</comment>
<comment type="function">
    <text evidence="1">The globular domain of the protein is located near the polypeptide exit tunnel on the outside of the subunit, while an extended beta-hairpin is found that lines the wall of the exit tunnel in the center of the 70S ribosome.</text>
</comment>
<comment type="subunit">
    <text evidence="1">Part of the 50S ribosomal subunit.</text>
</comment>
<comment type="subcellular location">
    <subcellularLocation>
        <location>Plastid</location>
        <location>Chloroplast</location>
    </subcellularLocation>
</comment>
<comment type="similarity">
    <text evidence="2">Belongs to the universal ribosomal protein uL22 family.</text>
</comment>
<keyword id="KW-0150">Chloroplast</keyword>
<keyword id="KW-0934">Plastid</keyword>
<keyword id="KW-0687">Ribonucleoprotein</keyword>
<keyword id="KW-0689">Ribosomal protein</keyword>
<keyword id="KW-0694">RNA-binding</keyword>
<keyword id="KW-0699">rRNA-binding</keyword>
<proteinExistence type="inferred from homology"/>
<gene>
    <name type="primary">rpl22</name>
</gene>
<geneLocation type="chloroplast"/>
<evidence type="ECO:0000250" key="1"/>
<evidence type="ECO:0000305" key="2"/>
<accession>Q6EW12</accession>
<sequence>MIKKTSGTEIRALARHIGMSAQKARRVIDQIRGCSYEQTLMILELMPYRACYPIFKLVYSAAANASHNRGLKEADLFISKAEVNEGVIVKRLKPRARGRSYPIKRPTCHITIVLSERPNFNFKNI</sequence>
<name>RK22_NYMAL</name>
<feature type="chain" id="PRO_0000125311" description="Large ribosomal subunit protein uL22c">
    <location>
        <begin position="1"/>
        <end position="125"/>
    </location>
</feature>
<dbReference type="EMBL" id="AJ627251">
    <property type="protein sequence ID" value="CAF28634.1"/>
    <property type="molecule type" value="Genomic_DNA"/>
</dbReference>
<dbReference type="RefSeq" id="YP_053194.1">
    <property type="nucleotide sequence ID" value="NC_006050.1"/>
</dbReference>
<dbReference type="SMR" id="Q6EW12"/>
<dbReference type="GeneID" id="2896138"/>
<dbReference type="GO" id="GO:0009507">
    <property type="term" value="C:chloroplast"/>
    <property type="evidence" value="ECO:0007669"/>
    <property type="project" value="UniProtKB-SubCell"/>
</dbReference>
<dbReference type="GO" id="GO:0015934">
    <property type="term" value="C:large ribosomal subunit"/>
    <property type="evidence" value="ECO:0007669"/>
    <property type="project" value="InterPro"/>
</dbReference>
<dbReference type="GO" id="GO:0019843">
    <property type="term" value="F:rRNA binding"/>
    <property type="evidence" value="ECO:0007669"/>
    <property type="project" value="UniProtKB-UniRule"/>
</dbReference>
<dbReference type="GO" id="GO:0003735">
    <property type="term" value="F:structural constituent of ribosome"/>
    <property type="evidence" value="ECO:0007669"/>
    <property type="project" value="InterPro"/>
</dbReference>
<dbReference type="GO" id="GO:0006412">
    <property type="term" value="P:translation"/>
    <property type="evidence" value="ECO:0007669"/>
    <property type="project" value="UniProtKB-UniRule"/>
</dbReference>
<dbReference type="CDD" id="cd00336">
    <property type="entry name" value="Ribosomal_L22"/>
    <property type="match status" value="1"/>
</dbReference>
<dbReference type="FunFam" id="3.90.470.10:FF:000006">
    <property type="entry name" value="50S ribosomal protein L22, chloroplastic"/>
    <property type="match status" value="1"/>
</dbReference>
<dbReference type="Gene3D" id="3.90.470.10">
    <property type="entry name" value="Ribosomal protein L22/L17"/>
    <property type="match status" value="1"/>
</dbReference>
<dbReference type="HAMAP" id="MF_01331_B">
    <property type="entry name" value="Ribosomal_uL22_B"/>
    <property type="match status" value="1"/>
</dbReference>
<dbReference type="InterPro" id="IPR001063">
    <property type="entry name" value="Ribosomal_uL22"/>
</dbReference>
<dbReference type="InterPro" id="IPR005727">
    <property type="entry name" value="Ribosomal_uL22_bac/chlpt-type"/>
</dbReference>
<dbReference type="InterPro" id="IPR047867">
    <property type="entry name" value="Ribosomal_uL22_bac/org-type"/>
</dbReference>
<dbReference type="InterPro" id="IPR018260">
    <property type="entry name" value="Ribosomal_uL22_CS"/>
</dbReference>
<dbReference type="InterPro" id="IPR036394">
    <property type="entry name" value="Ribosomal_uL22_sf"/>
</dbReference>
<dbReference type="NCBIfam" id="TIGR01044">
    <property type="entry name" value="rplV_bact"/>
    <property type="match status" value="1"/>
</dbReference>
<dbReference type="PANTHER" id="PTHR13501">
    <property type="entry name" value="CHLOROPLAST 50S RIBOSOMAL PROTEIN L22-RELATED"/>
    <property type="match status" value="1"/>
</dbReference>
<dbReference type="PANTHER" id="PTHR13501:SF10">
    <property type="entry name" value="LARGE RIBOSOMAL SUBUNIT PROTEIN UL22M"/>
    <property type="match status" value="1"/>
</dbReference>
<dbReference type="Pfam" id="PF00237">
    <property type="entry name" value="Ribosomal_L22"/>
    <property type="match status" value="1"/>
</dbReference>
<dbReference type="SUPFAM" id="SSF54843">
    <property type="entry name" value="Ribosomal protein L22"/>
    <property type="match status" value="1"/>
</dbReference>
<dbReference type="PROSITE" id="PS00464">
    <property type="entry name" value="RIBOSOMAL_L22"/>
    <property type="match status" value="1"/>
</dbReference>